<name>YPFU_ECOLI</name>
<proteinExistence type="inferred from homology"/>
<protein>
    <recommendedName>
        <fullName>Uncharacterized protein in traD-traI intergenic region</fullName>
    </recommendedName>
</protein>
<feature type="chain" id="PRO_0000219872" description="Uncharacterized protein in traD-traI intergenic region">
    <location>
        <begin position="1"/>
        <end position="75"/>
    </location>
</feature>
<feature type="domain" description="SpoVT-AbrB" evidence="1">
    <location>
        <begin position="3"/>
        <end position="45"/>
    </location>
</feature>
<organism>
    <name type="scientific">Escherichia coli (strain K12)</name>
    <dbReference type="NCBI Taxonomy" id="83333"/>
    <lineage>
        <taxon>Bacteria</taxon>
        <taxon>Pseudomonadati</taxon>
        <taxon>Pseudomonadota</taxon>
        <taxon>Gammaproteobacteria</taxon>
        <taxon>Enterobacterales</taxon>
        <taxon>Enterobacteriaceae</taxon>
        <taxon>Escherichia</taxon>
    </lineage>
</organism>
<sequence length="75" mass="8513">METTVFLSNRSQAVRLPKAVALPENVKRVEVIAVGRTRIITPAGETWDEWFDGNSVSADFMDNREQPGMQERESF</sequence>
<keyword id="KW-0238">DNA-binding</keyword>
<keyword id="KW-0614">Plasmid</keyword>
<dbReference type="EMBL" id="M29254">
    <property type="status" value="NOT_ANNOTATED_CDS"/>
    <property type="molecule type" value="Genomic_DNA"/>
</dbReference>
<dbReference type="PIR" id="JS0295">
    <property type="entry name" value="Q4ECTI"/>
</dbReference>
<dbReference type="RefSeq" id="WP_000450532.1">
    <property type="nucleotide sequence ID" value="NZ_JACEFS010000047.1"/>
</dbReference>
<dbReference type="SMR" id="P18355"/>
<dbReference type="KEGG" id="ecoc:C3026_24620"/>
<dbReference type="PATRIC" id="fig|83333.107.peg.608"/>
<dbReference type="PRO" id="PR:P18355"/>
<dbReference type="GO" id="GO:0003677">
    <property type="term" value="F:DNA binding"/>
    <property type="evidence" value="ECO:0007669"/>
    <property type="project" value="UniProtKB-KW"/>
</dbReference>
<dbReference type="Gene3D" id="2.10.260.10">
    <property type="match status" value="1"/>
</dbReference>
<dbReference type="InterPro" id="IPR047976">
    <property type="entry name" value="Anti_VapB2-like"/>
</dbReference>
<dbReference type="InterPro" id="IPR007159">
    <property type="entry name" value="SpoVT-AbrB_dom"/>
</dbReference>
<dbReference type="InterPro" id="IPR037914">
    <property type="entry name" value="SpoVT-AbrB_sf"/>
</dbReference>
<dbReference type="InterPro" id="IPR051734">
    <property type="entry name" value="VapB_TA_antitoxins"/>
</dbReference>
<dbReference type="NCBIfam" id="NF040493">
    <property type="entry name" value="TA_anti_VapB"/>
    <property type="match status" value="1"/>
</dbReference>
<dbReference type="PANTHER" id="PTHR37550">
    <property type="entry name" value="ANTITOXIN VAPB1"/>
    <property type="match status" value="1"/>
</dbReference>
<dbReference type="PANTHER" id="PTHR37550:SF3">
    <property type="entry name" value="ANTITOXIN VAPB1"/>
    <property type="match status" value="1"/>
</dbReference>
<dbReference type="SUPFAM" id="SSF89447">
    <property type="entry name" value="AbrB/MazE/MraZ-like"/>
    <property type="match status" value="1"/>
</dbReference>
<dbReference type="PROSITE" id="PS51740">
    <property type="entry name" value="SPOVT_ABRB"/>
    <property type="match status" value="1"/>
</dbReference>
<evidence type="ECO:0000255" key="1">
    <source>
        <dbReference type="PROSITE-ProRule" id="PRU01076"/>
    </source>
</evidence>
<evidence type="ECO:0000305" key="2"/>
<geneLocation type="plasmid">
    <name>F</name>
</geneLocation>
<comment type="similarity">
    <text evidence="2">Belongs to the VapB family.</text>
</comment>
<accession>P18355</accession>
<reference key="1">
    <citation type="journal article" date="1989" name="Gene">
        <title>Nucleotide sequence of the traD region in the Escherichia coli F sex factor.</title>
        <authorList>
            <person name="Jalajakumari M.B."/>
            <person name="Manning P.A."/>
        </authorList>
    </citation>
    <scope>NUCLEOTIDE SEQUENCE [GENOMIC DNA]</scope>
    <source>
        <strain>K12</strain>
    </source>
</reference>